<keyword id="KW-0066">ATP synthesis</keyword>
<keyword id="KW-0997">Cell inner membrane</keyword>
<keyword id="KW-1003">Cell membrane</keyword>
<keyword id="KW-0139">CF(1)</keyword>
<keyword id="KW-0375">Hydrogen ion transport</keyword>
<keyword id="KW-0406">Ion transport</keyword>
<keyword id="KW-0472">Membrane</keyword>
<keyword id="KW-0813">Transport</keyword>
<proteinExistence type="inferred from homology"/>
<name>ATPD_SALPA</name>
<feature type="chain" id="PRO_0000371119" description="ATP synthase subunit delta">
    <location>
        <begin position="1"/>
        <end position="177"/>
    </location>
</feature>
<accession>Q5PKW9</accession>
<organism>
    <name type="scientific">Salmonella paratyphi A (strain ATCC 9150 / SARB42)</name>
    <dbReference type="NCBI Taxonomy" id="295319"/>
    <lineage>
        <taxon>Bacteria</taxon>
        <taxon>Pseudomonadati</taxon>
        <taxon>Pseudomonadota</taxon>
        <taxon>Gammaproteobacteria</taxon>
        <taxon>Enterobacterales</taxon>
        <taxon>Enterobacteriaceae</taxon>
        <taxon>Salmonella</taxon>
    </lineage>
</organism>
<sequence>MSEFVTVARPYAKAAFDFAVEHQSVERWQDMLAFAAEVTKNEQMAELLSGALAPETLAESFIAVCGEQLDENGQNLIRVMAENNRLNALPDVLEQFIHLRAASEATSEVEVTSATALSEEQLSKISAAMEKRLSRKVKLNCKIDKSVMAGVIIRAGDMVIDGSVRGRLERLADVLQS</sequence>
<protein>
    <recommendedName>
        <fullName evidence="1">ATP synthase subunit delta</fullName>
    </recommendedName>
    <alternativeName>
        <fullName evidence="1">ATP synthase F(1) sector subunit delta</fullName>
    </alternativeName>
    <alternativeName>
        <fullName evidence="1">F-type ATPase subunit delta</fullName>
        <shortName evidence="1">F-ATPase subunit delta</shortName>
    </alternativeName>
</protein>
<gene>
    <name evidence="1" type="primary">atpH</name>
    <name type="ordered locus">SPA3707</name>
</gene>
<reference key="1">
    <citation type="journal article" date="2004" name="Nat. Genet.">
        <title>Comparison of genome degradation in Paratyphi A and Typhi, human-restricted serovars of Salmonella enterica that cause typhoid.</title>
        <authorList>
            <person name="McClelland M."/>
            <person name="Sanderson K.E."/>
            <person name="Clifton S.W."/>
            <person name="Latreille P."/>
            <person name="Porwollik S."/>
            <person name="Sabo A."/>
            <person name="Meyer R."/>
            <person name="Bieri T."/>
            <person name="Ozersky P."/>
            <person name="McLellan M."/>
            <person name="Harkins C.R."/>
            <person name="Wang C."/>
            <person name="Nguyen C."/>
            <person name="Berghoff A."/>
            <person name="Elliott G."/>
            <person name="Kohlberg S."/>
            <person name="Strong C."/>
            <person name="Du F."/>
            <person name="Carter J."/>
            <person name="Kremizki C."/>
            <person name="Layman D."/>
            <person name="Leonard S."/>
            <person name="Sun H."/>
            <person name="Fulton L."/>
            <person name="Nash W."/>
            <person name="Miner T."/>
            <person name="Minx P."/>
            <person name="Delehaunty K."/>
            <person name="Fronick C."/>
            <person name="Magrini V."/>
            <person name="Nhan M."/>
            <person name="Warren W."/>
            <person name="Florea L."/>
            <person name="Spieth J."/>
            <person name="Wilson R.K."/>
        </authorList>
    </citation>
    <scope>NUCLEOTIDE SEQUENCE [LARGE SCALE GENOMIC DNA]</scope>
    <source>
        <strain>ATCC 9150 / SARB42</strain>
    </source>
</reference>
<comment type="function">
    <text evidence="1">F(1)F(0) ATP synthase produces ATP from ADP in the presence of a proton or sodium gradient. F-type ATPases consist of two structural domains, F(1) containing the extramembraneous catalytic core and F(0) containing the membrane proton channel, linked together by a central stalk and a peripheral stalk. During catalysis, ATP synthesis in the catalytic domain of F(1) is coupled via a rotary mechanism of the central stalk subunits to proton translocation.</text>
</comment>
<comment type="function">
    <text evidence="1">This protein is part of the stalk that links CF(0) to CF(1). It either transmits conformational changes from CF(0) to CF(1) or is implicated in proton conduction.</text>
</comment>
<comment type="subunit">
    <text evidence="1">F-type ATPases have 2 components, F(1) - the catalytic core - and F(0) - the membrane proton channel. F(1) has five subunits: alpha(3), beta(3), gamma(1), delta(1), epsilon(1). F(0) has three main subunits: a(1), b(2) and c(10-14). The alpha and beta chains form an alternating ring which encloses part of the gamma chain. F(1) is attached to F(0) by a central stalk formed by the gamma and epsilon chains, while a peripheral stalk is formed by the delta and b chains.</text>
</comment>
<comment type="subcellular location">
    <subcellularLocation>
        <location evidence="1">Cell inner membrane</location>
        <topology evidence="1">Peripheral membrane protein</topology>
    </subcellularLocation>
</comment>
<comment type="similarity">
    <text evidence="1">Belongs to the ATPase delta chain family.</text>
</comment>
<dbReference type="EMBL" id="CP000026">
    <property type="protein sequence ID" value="AAV79499.1"/>
    <property type="molecule type" value="Genomic_DNA"/>
</dbReference>
<dbReference type="RefSeq" id="WP_001288957.1">
    <property type="nucleotide sequence ID" value="NC_006511.1"/>
</dbReference>
<dbReference type="SMR" id="Q5PKW9"/>
<dbReference type="KEGG" id="spt:SPA3707"/>
<dbReference type="HOGENOM" id="CLU_085114_3_0_6"/>
<dbReference type="Proteomes" id="UP000008185">
    <property type="component" value="Chromosome"/>
</dbReference>
<dbReference type="GO" id="GO:0005886">
    <property type="term" value="C:plasma membrane"/>
    <property type="evidence" value="ECO:0007669"/>
    <property type="project" value="UniProtKB-SubCell"/>
</dbReference>
<dbReference type="GO" id="GO:0045259">
    <property type="term" value="C:proton-transporting ATP synthase complex"/>
    <property type="evidence" value="ECO:0007669"/>
    <property type="project" value="UniProtKB-KW"/>
</dbReference>
<dbReference type="GO" id="GO:0046933">
    <property type="term" value="F:proton-transporting ATP synthase activity, rotational mechanism"/>
    <property type="evidence" value="ECO:0007669"/>
    <property type="project" value="UniProtKB-UniRule"/>
</dbReference>
<dbReference type="FunFam" id="1.10.520.20:FF:000001">
    <property type="entry name" value="ATP synthase subunit delta"/>
    <property type="match status" value="1"/>
</dbReference>
<dbReference type="Gene3D" id="1.10.520.20">
    <property type="entry name" value="N-terminal domain of the delta subunit of the F1F0-ATP synthase"/>
    <property type="match status" value="1"/>
</dbReference>
<dbReference type="HAMAP" id="MF_01416">
    <property type="entry name" value="ATP_synth_delta_bact"/>
    <property type="match status" value="1"/>
</dbReference>
<dbReference type="InterPro" id="IPR026015">
    <property type="entry name" value="ATP_synth_OSCP/delta_N_sf"/>
</dbReference>
<dbReference type="InterPro" id="IPR020781">
    <property type="entry name" value="ATPase_OSCP/d_CS"/>
</dbReference>
<dbReference type="InterPro" id="IPR000711">
    <property type="entry name" value="ATPase_OSCP/dsu"/>
</dbReference>
<dbReference type="NCBIfam" id="TIGR01145">
    <property type="entry name" value="ATP_synt_delta"/>
    <property type="match status" value="1"/>
</dbReference>
<dbReference type="NCBIfam" id="NF004402">
    <property type="entry name" value="PRK05758.2-2"/>
    <property type="match status" value="1"/>
</dbReference>
<dbReference type="NCBIfam" id="NF004404">
    <property type="entry name" value="PRK05758.2-5"/>
    <property type="match status" value="1"/>
</dbReference>
<dbReference type="PANTHER" id="PTHR11910">
    <property type="entry name" value="ATP SYNTHASE DELTA CHAIN"/>
    <property type="match status" value="1"/>
</dbReference>
<dbReference type="Pfam" id="PF00213">
    <property type="entry name" value="OSCP"/>
    <property type="match status" value="1"/>
</dbReference>
<dbReference type="PRINTS" id="PR00125">
    <property type="entry name" value="ATPASEDELTA"/>
</dbReference>
<dbReference type="SUPFAM" id="SSF47928">
    <property type="entry name" value="N-terminal domain of the delta subunit of the F1F0-ATP synthase"/>
    <property type="match status" value="1"/>
</dbReference>
<dbReference type="PROSITE" id="PS00389">
    <property type="entry name" value="ATPASE_DELTA"/>
    <property type="match status" value="1"/>
</dbReference>
<evidence type="ECO:0000255" key="1">
    <source>
        <dbReference type="HAMAP-Rule" id="MF_01416"/>
    </source>
</evidence>